<name>TRAE1_SALTI</name>
<evidence type="ECO:0000305" key="1"/>
<organism>
    <name type="scientific">Salmonella typhi</name>
    <dbReference type="NCBI Taxonomy" id="90370"/>
    <lineage>
        <taxon>Bacteria</taxon>
        <taxon>Pseudomonadati</taxon>
        <taxon>Pseudomonadota</taxon>
        <taxon>Gammaproteobacteria</taxon>
        <taxon>Enterobacterales</taxon>
        <taxon>Enterobacteriaceae</taxon>
        <taxon>Salmonella</taxon>
    </lineage>
</organism>
<protein>
    <recommendedName>
        <fullName>Protein TraE</fullName>
    </recommendedName>
</protein>
<reference key="1">
    <citation type="journal article" date="1986" name="J. Bacteriol.">
        <title>Nucleotide sequence of the tra YALE region from IncFV plasmid pED208.</title>
        <authorList>
            <person name="Finlay B.B."/>
            <person name="Frost L.S."/>
            <person name="Paranchych W."/>
        </authorList>
    </citation>
    <scope>NUCLEOTIDE SEQUENCE [GENOMIC DNA]</scope>
</reference>
<keyword id="KW-0184">Conjugation</keyword>
<keyword id="KW-0614">Plasmid</keyword>
<sequence>MEISARNSSTKIIAVIILSLTTLVFILGFAVAWLAVTNRALIHEQRTVVTPMTYNAPFVVSETKADTEYFRMMTLSFLALRLNVSPETVDSNHAFLMSFVEPEAREEFKKVLQEEAAQIKANDVNSTFYTTEINVYPVDGRIDVRGVLKMWIGNSRPSTEIKTYRLRLKYTGGFTRIGRFYEVTNEK</sequence>
<accession>P12057</accession>
<proteinExistence type="inferred from homology"/>
<comment type="function">
    <text>Involved in F pilus assembly.</text>
</comment>
<comment type="similarity">
    <text evidence="1">Belongs to the TraE family.</text>
</comment>
<geneLocation type="plasmid">
    <name>IncFV pED208</name>
</geneLocation>
<feature type="chain" id="PRO_0000068452" description="Protein TraE">
    <location>
        <begin position="1"/>
        <end position="187"/>
    </location>
</feature>
<dbReference type="EMBL" id="M14733">
    <property type="protein sequence ID" value="AAA25609.1"/>
    <property type="molecule type" value="Genomic_DNA"/>
</dbReference>
<dbReference type="RefSeq" id="WP_001535119.1">
    <property type="nucleotide sequence ID" value="NZ_AF411480.1"/>
</dbReference>
<dbReference type="SMR" id="P12057"/>
<dbReference type="InterPro" id="IPR007973">
    <property type="entry name" value="Pilus_assembly_TraE"/>
</dbReference>
<dbReference type="NCBIfam" id="TIGR02761">
    <property type="entry name" value="TraE_TIGR"/>
    <property type="match status" value="1"/>
</dbReference>
<dbReference type="Pfam" id="PF05309">
    <property type="entry name" value="TraE"/>
    <property type="match status" value="1"/>
</dbReference>
<gene>
    <name type="primary">traE</name>
</gene>